<evidence type="ECO:0000250" key="1"/>
<evidence type="ECO:0000256" key="2">
    <source>
        <dbReference type="SAM" id="MobiDB-lite"/>
    </source>
</evidence>
<evidence type="ECO:0000305" key="3"/>
<keyword id="KW-0539">Nucleus</keyword>
<keyword id="KW-1185">Reference proteome</keyword>
<dbReference type="EMBL" id="BC054174">
    <property type="protein sequence ID" value="AAH54174.1"/>
    <property type="molecule type" value="mRNA"/>
</dbReference>
<dbReference type="RefSeq" id="NP_001080842.1">
    <property type="nucleotide sequence ID" value="NM_001087373.1"/>
</dbReference>
<dbReference type="SMR" id="Q5U274"/>
<dbReference type="DNASU" id="380536"/>
<dbReference type="GeneID" id="380536"/>
<dbReference type="KEGG" id="xla:380536"/>
<dbReference type="AGR" id="Xenbase:XB-GENE-6256517"/>
<dbReference type="CTD" id="380536"/>
<dbReference type="Xenbase" id="XB-GENE-6256517">
    <property type="gene designation" value="ptma.L"/>
</dbReference>
<dbReference type="Proteomes" id="UP000186698">
    <property type="component" value="Chromosome 5L"/>
</dbReference>
<dbReference type="Bgee" id="380536">
    <property type="expression patterns" value="Expressed in gastrula and 19 other cell types or tissues"/>
</dbReference>
<dbReference type="GO" id="GO:0005634">
    <property type="term" value="C:nucleus"/>
    <property type="evidence" value="ECO:0000318"/>
    <property type="project" value="GO_Central"/>
</dbReference>
<dbReference type="GO" id="GO:0042393">
    <property type="term" value="F:histone binding"/>
    <property type="evidence" value="ECO:0000318"/>
    <property type="project" value="GO_Central"/>
</dbReference>
<dbReference type="GO" id="GO:0043066">
    <property type="term" value="P:negative regulation of apoptotic process"/>
    <property type="evidence" value="ECO:0000318"/>
    <property type="project" value="GO_Central"/>
</dbReference>
<dbReference type="GO" id="GO:0045944">
    <property type="term" value="P:positive regulation of transcription by RNA polymerase II"/>
    <property type="evidence" value="ECO:0000318"/>
    <property type="project" value="GO_Central"/>
</dbReference>
<dbReference type="InterPro" id="IPR004931">
    <property type="entry name" value="Pro/parathymosin"/>
</dbReference>
<dbReference type="PANTHER" id="PTHR22745">
    <property type="entry name" value="PROTHYMOSIN ALPHA"/>
    <property type="match status" value="1"/>
</dbReference>
<dbReference type="PANTHER" id="PTHR22745:SF0">
    <property type="entry name" value="PROTHYMOSIN ALPHA"/>
    <property type="match status" value="1"/>
</dbReference>
<dbReference type="Pfam" id="PF03247">
    <property type="entry name" value="Prothymosin"/>
    <property type="match status" value="1"/>
</dbReference>
<accession>Q5U274</accession>
<accession>Q7SZ20</accession>
<feature type="chain" id="PRO_0000191630" description="Prothymosin alpha-A">
    <location>
        <begin position="1"/>
        <end position="111"/>
    </location>
</feature>
<feature type="region of interest" description="Disordered" evidence="2">
    <location>
        <begin position="1"/>
        <end position="111"/>
    </location>
</feature>
<feature type="compositionally biased region" description="Basic and acidic residues" evidence="2">
    <location>
        <begin position="9"/>
        <end position="42"/>
    </location>
</feature>
<feature type="compositionally biased region" description="Acidic residues" evidence="2">
    <location>
        <begin position="43"/>
        <end position="81"/>
    </location>
</feature>
<feature type="compositionally biased region" description="Acidic residues" evidence="2">
    <location>
        <begin position="90"/>
        <end position="100"/>
    </location>
</feature>
<feature type="compositionally biased region" description="Basic and acidic residues" evidence="2">
    <location>
        <begin position="101"/>
        <end position="111"/>
    </location>
</feature>
<reference key="1">
    <citation type="submission" date="2003-06" db="EMBL/GenBank/DDBJ databases">
        <authorList>
            <consortium name="NIH - Xenopus Gene Collection (XGC) project"/>
        </authorList>
    </citation>
    <scope>NUCLEOTIDE SEQUENCE [LARGE SCALE MRNA]</scope>
    <source>
        <tissue>Tadpole</tissue>
    </source>
</reference>
<name>PTMAA_XENLA</name>
<gene>
    <name type="primary">ptma-a</name>
</gene>
<organism>
    <name type="scientific">Xenopus laevis</name>
    <name type="common">African clawed frog</name>
    <dbReference type="NCBI Taxonomy" id="8355"/>
    <lineage>
        <taxon>Eukaryota</taxon>
        <taxon>Metazoa</taxon>
        <taxon>Chordata</taxon>
        <taxon>Craniata</taxon>
        <taxon>Vertebrata</taxon>
        <taxon>Euteleostomi</taxon>
        <taxon>Amphibia</taxon>
        <taxon>Batrachia</taxon>
        <taxon>Anura</taxon>
        <taxon>Pipoidea</taxon>
        <taxon>Pipidae</taxon>
        <taxon>Xenopodinae</taxon>
        <taxon>Xenopus</taxon>
        <taxon>Xenopus</taxon>
    </lineage>
</organism>
<proteinExistence type="inferred from homology"/>
<protein>
    <recommendedName>
        <fullName>Prothymosin alpha-A</fullName>
    </recommendedName>
</protein>
<sequence>MSDTAVDASVEKTTKDLKAKEKEVVEEAENGKDKPTNGKAENEENGEPEVDNEGDEEDEVDEEDEEDEVEGEDDDDDDEVEGVTGKRAAEDDEDDDDDDVEIKKQKTDEDD</sequence>
<comment type="subcellular location">
    <subcellularLocation>
        <location evidence="1">Nucleus</location>
    </subcellularLocation>
</comment>
<comment type="similarity">
    <text evidence="3">Belongs to the pro/parathymosin family.</text>
</comment>